<protein>
    <recommendedName>
        <fullName evidence="1">Large ribosomal subunit protein uL15</fullName>
    </recommendedName>
    <alternativeName>
        <fullName evidence="3">50S ribosomal protein L15</fullName>
    </alternativeName>
</protein>
<evidence type="ECO:0000255" key="1">
    <source>
        <dbReference type="HAMAP-Rule" id="MF_01341"/>
    </source>
</evidence>
<evidence type="ECO:0000256" key="2">
    <source>
        <dbReference type="SAM" id="MobiDB-lite"/>
    </source>
</evidence>
<evidence type="ECO:0000305" key="3"/>
<name>RL15_NITV2</name>
<gene>
    <name evidence="1" type="primary">rplO</name>
    <name type="ordered locus">DVU_1322</name>
</gene>
<keyword id="KW-1185">Reference proteome</keyword>
<keyword id="KW-0687">Ribonucleoprotein</keyword>
<keyword id="KW-0689">Ribosomal protein</keyword>
<keyword id="KW-0694">RNA-binding</keyword>
<keyword id="KW-0699">rRNA-binding</keyword>
<accession>Q72CG1</accession>
<feature type="chain" id="PRO_0000104718" description="Large ribosomal subunit protein uL15">
    <location>
        <begin position="1"/>
        <end position="148"/>
    </location>
</feature>
<feature type="region of interest" description="Disordered" evidence="2">
    <location>
        <begin position="1"/>
        <end position="57"/>
    </location>
</feature>
<feature type="compositionally biased region" description="Gly residues" evidence="2">
    <location>
        <begin position="21"/>
        <end position="35"/>
    </location>
</feature>
<feature type="compositionally biased region" description="Gly residues" evidence="2">
    <location>
        <begin position="42"/>
        <end position="52"/>
    </location>
</feature>
<dbReference type="EMBL" id="AE017285">
    <property type="protein sequence ID" value="AAS95800.1"/>
    <property type="molecule type" value="Genomic_DNA"/>
</dbReference>
<dbReference type="RefSeq" id="WP_010938617.1">
    <property type="nucleotide sequence ID" value="NC_002937.3"/>
</dbReference>
<dbReference type="RefSeq" id="YP_010541.1">
    <property type="nucleotide sequence ID" value="NC_002937.3"/>
</dbReference>
<dbReference type="SMR" id="Q72CG1"/>
<dbReference type="STRING" id="882.DVU_1322"/>
<dbReference type="PaxDb" id="882-DVU_1322"/>
<dbReference type="EnsemblBacteria" id="AAS95800">
    <property type="protein sequence ID" value="AAS95800"/>
    <property type="gene ID" value="DVU_1322"/>
</dbReference>
<dbReference type="KEGG" id="dvu:DVU_1322"/>
<dbReference type="PATRIC" id="fig|882.5.peg.1234"/>
<dbReference type="eggNOG" id="COG0200">
    <property type="taxonomic scope" value="Bacteria"/>
</dbReference>
<dbReference type="HOGENOM" id="CLU_055188_4_2_7"/>
<dbReference type="OrthoDB" id="9810293at2"/>
<dbReference type="PhylomeDB" id="Q72CG1"/>
<dbReference type="Proteomes" id="UP000002194">
    <property type="component" value="Chromosome"/>
</dbReference>
<dbReference type="GO" id="GO:0022625">
    <property type="term" value="C:cytosolic large ribosomal subunit"/>
    <property type="evidence" value="ECO:0007669"/>
    <property type="project" value="TreeGrafter"/>
</dbReference>
<dbReference type="GO" id="GO:0019843">
    <property type="term" value="F:rRNA binding"/>
    <property type="evidence" value="ECO:0007669"/>
    <property type="project" value="UniProtKB-UniRule"/>
</dbReference>
<dbReference type="GO" id="GO:0003735">
    <property type="term" value="F:structural constituent of ribosome"/>
    <property type="evidence" value="ECO:0007669"/>
    <property type="project" value="InterPro"/>
</dbReference>
<dbReference type="GO" id="GO:0006412">
    <property type="term" value="P:translation"/>
    <property type="evidence" value="ECO:0007669"/>
    <property type="project" value="UniProtKB-UniRule"/>
</dbReference>
<dbReference type="Gene3D" id="3.100.10.10">
    <property type="match status" value="1"/>
</dbReference>
<dbReference type="HAMAP" id="MF_01341">
    <property type="entry name" value="Ribosomal_uL15"/>
    <property type="match status" value="1"/>
</dbReference>
<dbReference type="InterPro" id="IPR030878">
    <property type="entry name" value="Ribosomal_uL15"/>
</dbReference>
<dbReference type="InterPro" id="IPR021131">
    <property type="entry name" value="Ribosomal_uL15/eL18"/>
</dbReference>
<dbReference type="InterPro" id="IPR036227">
    <property type="entry name" value="Ribosomal_uL15/eL18_sf"/>
</dbReference>
<dbReference type="InterPro" id="IPR005749">
    <property type="entry name" value="Ribosomal_uL15_bac-type"/>
</dbReference>
<dbReference type="InterPro" id="IPR001196">
    <property type="entry name" value="Ribosomal_uL15_CS"/>
</dbReference>
<dbReference type="NCBIfam" id="TIGR01071">
    <property type="entry name" value="rplO_bact"/>
    <property type="match status" value="1"/>
</dbReference>
<dbReference type="PANTHER" id="PTHR12934">
    <property type="entry name" value="50S RIBOSOMAL PROTEIN L15"/>
    <property type="match status" value="1"/>
</dbReference>
<dbReference type="PANTHER" id="PTHR12934:SF11">
    <property type="entry name" value="LARGE RIBOSOMAL SUBUNIT PROTEIN UL15M"/>
    <property type="match status" value="1"/>
</dbReference>
<dbReference type="Pfam" id="PF00828">
    <property type="entry name" value="Ribosomal_L27A"/>
    <property type="match status" value="1"/>
</dbReference>
<dbReference type="SUPFAM" id="SSF52080">
    <property type="entry name" value="Ribosomal proteins L15p and L18e"/>
    <property type="match status" value="1"/>
</dbReference>
<dbReference type="PROSITE" id="PS00475">
    <property type="entry name" value="RIBOSOMAL_L15"/>
    <property type="match status" value="1"/>
</dbReference>
<proteinExistence type="inferred from homology"/>
<reference key="1">
    <citation type="journal article" date="2004" name="Nat. Biotechnol.">
        <title>The genome sequence of the anaerobic, sulfate-reducing bacterium Desulfovibrio vulgaris Hildenborough.</title>
        <authorList>
            <person name="Heidelberg J.F."/>
            <person name="Seshadri R."/>
            <person name="Haveman S.A."/>
            <person name="Hemme C.L."/>
            <person name="Paulsen I.T."/>
            <person name="Kolonay J.F."/>
            <person name="Eisen J.A."/>
            <person name="Ward N.L."/>
            <person name="Methe B.A."/>
            <person name="Brinkac L.M."/>
            <person name="Daugherty S.C."/>
            <person name="DeBoy R.T."/>
            <person name="Dodson R.J."/>
            <person name="Durkin A.S."/>
            <person name="Madupu R."/>
            <person name="Nelson W.C."/>
            <person name="Sullivan S.A."/>
            <person name="Fouts D.E."/>
            <person name="Haft D.H."/>
            <person name="Selengut J."/>
            <person name="Peterson J.D."/>
            <person name="Davidsen T.M."/>
            <person name="Zafar N."/>
            <person name="Zhou L."/>
            <person name="Radune D."/>
            <person name="Dimitrov G."/>
            <person name="Hance M."/>
            <person name="Tran K."/>
            <person name="Khouri H.M."/>
            <person name="Gill J."/>
            <person name="Utterback T.R."/>
            <person name="Feldblyum T.V."/>
            <person name="Wall J.D."/>
            <person name="Voordouw G."/>
            <person name="Fraser C.M."/>
        </authorList>
    </citation>
    <scope>NUCLEOTIDE SEQUENCE [LARGE SCALE GENOMIC DNA]</scope>
    <source>
        <strain>ATCC 29579 / DSM 644 / CCUG 34227 / NCIMB 8303 / VKM B-1760 / Hildenborough</strain>
    </source>
</reference>
<organism>
    <name type="scientific">Nitratidesulfovibrio vulgaris (strain ATCC 29579 / DSM 644 / CCUG 34227 / NCIMB 8303 / VKM B-1760 / Hildenborough)</name>
    <name type="common">Desulfovibrio vulgaris</name>
    <dbReference type="NCBI Taxonomy" id="882"/>
    <lineage>
        <taxon>Bacteria</taxon>
        <taxon>Pseudomonadati</taxon>
        <taxon>Thermodesulfobacteriota</taxon>
        <taxon>Desulfovibrionia</taxon>
        <taxon>Desulfovibrionales</taxon>
        <taxon>Desulfovibrionaceae</taxon>
        <taxon>Nitratidesulfovibrio</taxon>
    </lineage>
</organism>
<comment type="function">
    <text evidence="1">Binds to the 23S rRNA.</text>
</comment>
<comment type="subunit">
    <text evidence="1">Part of the 50S ribosomal subunit.</text>
</comment>
<comment type="similarity">
    <text evidence="1">Belongs to the universal ribosomal protein uL15 family.</text>
</comment>
<sequence length="148" mass="15834">MRLHDLYPFPEERKTRKRVGRGSGSGLGCTSGKGNKGQNARAGGGVRPGFEGGQMPLQRRLPKRGFKNMFAVKYEVINLARLLAAFEGKAEITLDDIYDRGLCSLGSAVKILGEGDVTTAIKVEAHKFSASAVEKIRNAGGEAKALEG</sequence>